<feature type="chain" id="PRO_1000018555" description="Indole-3-glycerol phosphate synthase">
    <location>
        <begin position="1"/>
        <end position="255"/>
    </location>
</feature>
<comment type="catalytic activity">
    <reaction evidence="1">
        <text>1-(2-carboxyphenylamino)-1-deoxy-D-ribulose 5-phosphate + H(+) = (1S,2R)-1-C-(indol-3-yl)glycerol 3-phosphate + CO2 + H2O</text>
        <dbReference type="Rhea" id="RHEA:23476"/>
        <dbReference type="ChEBI" id="CHEBI:15377"/>
        <dbReference type="ChEBI" id="CHEBI:15378"/>
        <dbReference type="ChEBI" id="CHEBI:16526"/>
        <dbReference type="ChEBI" id="CHEBI:58613"/>
        <dbReference type="ChEBI" id="CHEBI:58866"/>
        <dbReference type="EC" id="4.1.1.48"/>
    </reaction>
</comment>
<comment type="pathway">
    <text evidence="1">Amino-acid biosynthesis; L-tryptophan biosynthesis; L-tryptophan from chorismate: step 4/5.</text>
</comment>
<comment type="similarity">
    <text evidence="1">Belongs to the TrpC family.</text>
</comment>
<organism>
    <name type="scientific">Streptococcus pneumoniae serotype 2 (strain D39 / NCTC 7466)</name>
    <dbReference type="NCBI Taxonomy" id="373153"/>
    <lineage>
        <taxon>Bacteria</taxon>
        <taxon>Bacillati</taxon>
        <taxon>Bacillota</taxon>
        <taxon>Bacilli</taxon>
        <taxon>Lactobacillales</taxon>
        <taxon>Streptococcaceae</taxon>
        <taxon>Streptococcus</taxon>
    </lineage>
</organism>
<proteinExistence type="inferred from homology"/>
<gene>
    <name evidence="1" type="primary">trpC</name>
    <name type="ordered locus">SPD_1599</name>
</gene>
<name>TRPC_STRP2</name>
<keyword id="KW-0028">Amino-acid biosynthesis</keyword>
<keyword id="KW-0057">Aromatic amino acid biosynthesis</keyword>
<keyword id="KW-0210">Decarboxylase</keyword>
<keyword id="KW-0456">Lyase</keyword>
<keyword id="KW-1185">Reference proteome</keyword>
<keyword id="KW-0822">Tryptophan biosynthesis</keyword>
<reference key="1">
    <citation type="journal article" date="2007" name="J. Bacteriol.">
        <title>Genome sequence of Avery's virulent serotype 2 strain D39 of Streptococcus pneumoniae and comparison with that of unencapsulated laboratory strain R6.</title>
        <authorList>
            <person name="Lanie J.A."/>
            <person name="Ng W.-L."/>
            <person name="Kazmierczak K.M."/>
            <person name="Andrzejewski T.M."/>
            <person name="Davidsen T.M."/>
            <person name="Wayne K.J."/>
            <person name="Tettelin H."/>
            <person name="Glass J.I."/>
            <person name="Winkler M.E."/>
        </authorList>
    </citation>
    <scope>NUCLEOTIDE SEQUENCE [LARGE SCALE GENOMIC DNA]</scope>
    <source>
        <strain>D39 / NCTC 7466</strain>
    </source>
</reference>
<dbReference type="EC" id="4.1.1.48" evidence="1"/>
<dbReference type="EMBL" id="CP000410">
    <property type="protein sequence ID" value="ABJ55134.1"/>
    <property type="molecule type" value="Genomic_DNA"/>
</dbReference>
<dbReference type="RefSeq" id="WP_000076536.1">
    <property type="nucleotide sequence ID" value="NZ_JAMLJR010000003.1"/>
</dbReference>
<dbReference type="SMR" id="Q04IY7"/>
<dbReference type="PaxDb" id="373153-SPD_1599"/>
<dbReference type="KEGG" id="spd:SPD_1599"/>
<dbReference type="eggNOG" id="COG0134">
    <property type="taxonomic scope" value="Bacteria"/>
</dbReference>
<dbReference type="HOGENOM" id="CLU_034247_2_1_9"/>
<dbReference type="BioCyc" id="SPNE373153:G1G6V-1729-MONOMER"/>
<dbReference type="UniPathway" id="UPA00035">
    <property type="reaction ID" value="UER00043"/>
</dbReference>
<dbReference type="Proteomes" id="UP000001452">
    <property type="component" value="Chromosome"/>
</dbReference>
<dbReference type="GO" id="GO:0004425">
    <property type="term" value="F:indole-3-glycerol-phosphate synthase activity"/>
    <property type="evidence" value="ECO:0007669"/>
    <property type="project" value="UniProtKB-UniRule"/>
</dbReference>
<dbReference type="GO" id="GO:0004640">
    <property type="term" value="F:phosphoribosylanthranilate isomerase activity"/>
    <property type="evidence" value="ECO:0007669"/>
    <property type="project" value="TreeGrafter"/>
</dbReference>
<dbReference type="GO" id="GO:0000162">
    <property type="term" value="P:L-tryptophan biosynthetic process"/>
    <property type="evidence" value="ECO:0007669"/>
    <property type="project" value="UniProtKB-UniRule"/>
</dbReference>
<dbReference type="CDD" id="cd00331">
    <property type="entry name" value="IGPS"/>
    <property type="match status" value="1"/>
</dbReference>
<dbReference type="FunFam" id="3.20.20.70:FF:000024">
    <property type="entry name" value="Indole-3-glycerol phosphate synthase"/>
    <property type="match status" value="1"/>
</dbReference>
<dbReference type="Gene3D" id="3.20.20.70">
    <property type="entry name" value="Aldolase class I"/>
    <property type="match status" value="1"/>
</dbReference>
<dbReference type="HAMAP" id="MF_00134_B">
    <property type="entry name" value="IGPS_B"/>
    <property type="match status" value="1"/>
</dbReference>
<dbReference type="InterPro" id="IPR013785">
    <property type="entry name" value="Aldolase_TIM"/>
</dbReference>
<dbReference type="InterPro" id="IPR045186">
    <property type="entry name" value="Indole-3-glycerol_P_synth"/>
</dbReference>
<dbReference type="InterPro" id="IPR013798">
    <property type="entry name" value="Indole-3-glycerol_P_synth_dom"/>
</dbReference>
<dbReference type="InterPro" id="IPR001468">
    <property type="entry name" value="Indole-3-GlycerolPSynthase_CS"/>
</dbReference>
<dbReference type="InterPro" id="IPR011060">
    <property type="entry name" value="RibuloseP-bd_barrel"/>
</dbReference>
<dbReference type="NCBIfam" id="NF001371">
    <property type="entry name" value="PRK00278.1-3"/>
    <property type="match status" value="1"/>
</dbReference>
<dbReference type="NCBIfam" id="NF001377">
    <property type="entry name" value="PRK00278.2-4"/>
    <property type="match status" value="1"/>
</dbReference>
<dbReference type="PANTHER" id="PTHR22854:SF2">
    <property type="entry name" value="INDOLE-3-GLYCEROL-PHOSPHATE SYNTHASE"/>
    <property type="match status" value="1"/>
</dbReference>
<dbReference type="PANTHER" id="PTHR22854">
    <property type="entry name" value="TRYPTOPHAN BIOSYNTHESIS PROTEIN"/>
    <property type="match status" value="1"/>
</dbReference>
<dbReference type="Pfam" id="PF00218">
    <property type="entry name" value="IGPS"/>
    <property type="match status" value="1"/>
</dbReference>
<dbReference type="SUPFAM" id="SSF51366">
    <property type="entry name" value="Ribulose-phoshate binding barrel"/>
    <property type="match status" value="1"/>
</dbReference>
<dbReference type="PROSITE" id="PS00614">
    <property type="entry name" value="IGPS"/>
    <property type="match status" value="1"/>
</dbReference>
<accession>Q04IY7</accession>
<sequence length="255" mass="28915">MSQEFLARILEQKAREVEQMKLEQIQPLRQTYRLAEFLKNHQDCLQVIAEVKKASPSLGDINLDVDIVQQAQTYEENGAVMISVLTDEVFFKGHLDYLREISSQVEIPTLNKDFIIDEKQIIRARNAGATVILLIVAALSEERLKELYDYATELGLEVLVETHNLAELEVAHRLGAEIIGVNNRNLTTFEVDLQTSVDLAPYFEEGRYYISESAIFTGQDAERLAPYFNGILVGTALMQAENVVQRIKELQIDKG</sequence>
<protein>
    <recommendedName>
        <fullName evidence="1">Indole-3-glycerol phosphate synthase</fullName>
        <shortName evidence="1">IGPS</shortName>
        <ecNumber evidence="1">4.1.1.48</ecNumber>
    </recommendedName>
</protein>
<evidence type="ECO:0000255" key="1">
    <source>
        <dbReference type="HAMAP-Rule" id="MF_00134"/>
    </source>
</evidence>